<name>MYRA_MICGR</name>
<proteinExistence type="inferred from homology"/>
<protein>
    <recommendedName>
        <fullName>Putative 23S rRNA (guanine-N(1)-)-methyltransferase</fullName>
        <ecNumber>2.1.1.-</ecNumber>
    </recommendedName>
    <alternativeName>
        <fullName>Mycinamicin-resistance protein MyrA</fullName>
    </alternativeName>
</protein>
<evidence type="ECO:0000250" key="1"/>
<evidence type="ECO:0000305" key="2"/>
<keyword id="KW-0046">Antibiotic resistance</keyword>
<keyword id="KW-0479">Metal-binding</keyword>
<keyword id="KW-0489">Methyltransferase</keyword>
<keyword id="KW-0949">S-adenosyl-L-methionine</keyword>
<keyword id="KW-0808">Transferase</keyword>
<keyword id="KW-0862">Zinc</keyword>
<feature type="chain" id="PRO_0000096672" description="Putative 23S rRNA (guanine-N(1)-)-methyltransferase">
    <location>
        <begin position="1"/>
        <end position="295"/>
    </location>
</feature>
<feature type="binding site" evidence="1">
    <location>
        <position position="11"/>
    </location>
    <ligand>
        <name>Zn(2+)</name>
        <dbReference type="ChEBI" id="CHEBI:29105"/>
    </ligand>
</feature>
<feature type="binding site" evidence="1">
    <location>
        <position position="14"/>
    </location>
    <ligand>
        <name>Zn(2+)</name>
        <dbReference type="ChEBI" id="CHEBI:29105"/>
    </ligand>
</feature>
<feature type="binding site" evidence="1">
    <location>
        <position position="31"/>
    </location>
    <ligand>
        <name>Zn(2+)</name>
        <dbReference type="ChEBI" id="CHEBI:29105"/>
    </ligand>
</feature>
<feature type="binding site" evidence="1">
    <location>
        <position position="35"/>
    </location>
    <ligand>
        <name>Zn(2+)</name>
        <dbReference type="ChEBI" id="CHEBI:29105"/>
    </ligand>
</feature>
<feature type="binding site" evidence="1">
    <location>
        <position position="74"/>
    </location>
    <ligand>
        <name>S-adenosyl-L-methionine</name>
        <dbReference type="ChEBI" id="CHEBI:59789"/>
    </ligand>
</feature>
<feature type="binding site" evidence="1">
    <location>
        <begin position="116"/>
        <end position="117"/>
    </location>
    <ligand>
        <name>S-adenosyl-L-methionine</name>
        <dbReference type="ChEBI" id="CHEBI:59789"/>
    </ligand>
</feature>
<feature type="binding site" evidence="1">
    <location>
        <position position="204"/>
    </location>
    <ligand>
        <name>S-adenosyl-L-methionine</name>
        <dbReference type="ChEBI" id="CHEBI:59789"/>
    </ligand>
</feature>
<comment type="function">
    <text>Confers strong resistance to mycinamicin (MM) and tylosin (TY). May function as methyltransferase.</text>
</comment>
<comment type="similarity">
    <text evidence="2">Belongs to the methyltransferase superfamily. RlmA family.</text>
</comment>
<dbReference type="EC" id="2.1.1.-"/>
<dbReference type="EMBL" id="D16099">
    <property type="protein sequence ID" value="BAA03674.1"/>
    <property type="molecule type" value="Genomic_DNA"/>
</dbReference>
<dbReference type="RefSeq" id="WP_063854489.1">
    <property type="nucleotide sequence ID" value="NG_048010.1"/>
</dbReference>
<dbReference type="SMR" id="P37000"/>
<dbReference type="CARD" id="ARO:3001300">
    <property type="molecule name" value="myrA"/>
    <property type="mechanism identifier" value="ARO:0001001"/>
    <property type="mechanism name" value="antibiotic target alteration"/>
</dbReference>
<dbReference type="GO" id="GO:0046872">
    <property type="term" value="F:metal ion binding"/>
    <property type="evidence" value="ECO:0007669"/>
    <property type="project" value="UniProtKB-KW"/>
</dbReference>
<dbReference type="GO" id="GO:0008168">
    <property type="term" value="F:methyltransferase activity"/>
    <property type="evidence" value="ECO:0007669"/>
    <property type="project" value="UniProtKB-KW"/>
</dbReference>
<dbReference type="GO" id="GO:0032259">
    <property type="term" value="P:methylation"/>
    <property type="evidence" value="ECO:0007669"/>
    <property type="project" value="UniProtKB-KW"/>
</dbReference>
<dbReference type="GO" id="GO:0046677">
    <property type="term" value="P:response to antibiotic"/>
    <property type="evidence" value="ECO:0007669"/>
    <property type="project" value="UniProtKB-KW"/>
</dbReference>
<dbReference type="Gene3D" id="3.40.50.150">
    <property type="entry name" value="Vaccinia Virus protein VP39"/>
    <property type="match status" value="1"/>
</dbReference>
<dbReference type="InterPro" id="IPR041698">
    <property type="entry name" value="Methyltransf_25"/>
</dbReference>
<dbReference type="InterPro" id="IPR048647">
    <property type="entry name" value="RlmA_N"/>
</dbReference>
<dbReference type="InterPro" id="IPR016718">
    <property type="entry name" value="rRNA_m1G-MeTrfase_A_prd"/>
</dbReference>
<dbReference type="InterPro" id="IPR029063">
    <property type="entry name" value="SAM-dependent_MTases_sf"/>
</dbReference>
<dbReference type="NCBIfam" id="NF000476">
    <property type="entry name" value="myrA"/>
    <property type="match status" value="1"/>
</dbReference>
<dbReference type="Pfam" id="PF13649">
    <property type="entry name" value="Methyltransf_25"/>
    <property type="match status" value="1"/>
</dbReference>
<dbReference type="Pfam" id="PF21302">
    <property type="entry name" value="Zn_ribbon_RlmA"/>
    <property type="match status" value="1"/>
</dbReference>
<dbReference type="PIRSF" id="PIRSF018249">
    <property type="entry name" value="MyrA_prd"/>
    <property type="match status" value="1"/>
</dbReference>
<dbReference type="SUPFAM" id="SSF53335">
    <property type="entry name" value="S-adenosyl-L-methionine-dependent methyltransferases"/>
    <property type="match status" value="1"/>
</dbReference>
<accession>P37000</accession>
<sequence>MHPDLLPHLRCPVCGQPLHQADAAPPRALRCPAGHSFDIARQGYVNLLTGRAPHVGDTAEMIAAREEFLAAGHYDPFSAALATAAARAVPRRVRPGDGVGEPVAYPDLVVDAGAGTGRHLAAVLDAVPTAVGLALDVSKPALRRAARAHPRAGAAVCDTWGRLPLADATVAVLVNVFAPRNGPEFRRVLRPDGALLVVTPTAEHLVELVDRLGLLRVDPAKDARVADSLTRHFEPAGQSTHRHRLQLTRKEVLTLVGMGPSAWHTDPARLTARVAALSEPVTVTAAVRLARYRPI</sequence>
<gene>
    <name type="primary">myrA</name>
</gene>
<organism>
    <name type="scientific">Micromonospora griseorubida</name>
    <dbReference type="NCBI Taxonomy" id="28040"/>
    <lineage>
        <taxon>Bacteria</taxon>
        <taxon>Bacillati</taxon>
        <taxon>Actinomycetota</taxon>
        <taxon>Actinomycetes</taxon>
        <taxon>Micromonosporales</taxon>
        <taxon>Micromonosporaceae</taxon>
        <taxon>Micromonospora</taxon>
    </lineage>
</organism>
<reference key="1">
    <citation type="journal article" date="1994" name="Gene">
        <title>Cloning and sequences of two macrolide-resistance-encoding genes from mycinamicin-producing Micromonospora griseorubida.</title>
        <authorList>
            <person name="Inouye M."/>
            <person name="Morohoshi T."/>
            <person name="Horinouchi S."/>
            <person name="Beppu T."/>
        </authorList>
    </citation>
    <scope>NUCLEOTIDE SEQUENCE [GENOMIC DNA]</scope>
</reference>